<feature type="chain" id="PRO_0000365661" description="Adenylate kinase">
    <location>
        <begin position="1"/>
        <end position="257"/>
    </location>
</feature>
<feature type="region of interest" description="NMP" evidence="1">
    <location>
        <begin position="72"/>
        <end position="101"/>
    </location>
</feature>
<feature type="region of interest" description="LID" evidence="1">
    <location>
        <begin position="169"/>
        <end position="206"/>
    </location>
</feature>
<feature type="binding site" evidence="1">
    <location>
        <begin position="52"/>
        <end position="57"/>
    </location>
    <ligand>
        <name>ATP</name>
        <dbReference type="ChEBI" id="CHEBI:30616"/>
    </ligand>
</feature>
<feature type="binding site" evidence="1">
    <location>
        <position position="73"/>
    </location>
    <ligand>
        <name>AMP</name>
        <dbReference type="ChEBI" id="CHEBI:456215"/>
    </ligand>
</feature>
<feature type="binding site" evidence="1">
    <location>
        <position position="78"/>
    </location>
    <ligand>
        <name>AMP</name>
        <dbReference type="ChEBI" id="CHEBI:456215"/>
    </ligand>
</feature>
<feature type="binding site" evidence="1">
    <location>
        <begin position="99"/>
        <end position="101"/>
    </location>
    <ligand>
        <name>AMP</name>
        <dbReference type="ChEBI" id="CHEBI:456215"/>
    </ligand>
</feature>
<feature type="binding site" evidence="1">
    <location>
        <begin position="128"/>
        <end position="131"/>
    </location>
    <ligand>
        <name>AMP</name>
        <dbReference type="ChEBI" id="CHEBI:456215"/>
    </ligand>
</feature>
<feature type="binding site" evidence="1">
    <location>
        <position position="135"/>
    </location>
    <ligand>
        <name>AMP</name>
        <dbReference type="ChEBI" id="CHEBI:456215"/>
    </ligand>
</feature>
<feature type="binding site" evidence="1">
    <location>
        <position position="170"/>
    </location>
    <ligand>
        <name>ATP</name>
        <dbReference type="ChEBI" id="CHEBI:30616"/>
    </ligand>
</feature>
<feature type="binding site" evidence="1">
    <location>
        <begin position="179"/>
        <end position="180"/>
    </location>
    <ligand>
        <name>ATP</name>
        <dbReference type="ChEBI" id="CHEBI:30616"/>
    </ligand>
</feature>
<feature type="binding site" evidence="1">
    <location>
        <position position="203"/>
    </location>
    <ligand>
        <name>AMP</name>
        <dbReference type="ChEBI" id="CHEBI:456215"/>
    </ligand>
</feature>
<feature type="binding site" evidence="1">
    <location>
        <position position="214"/>
    </location>
    <ligand>
        <name>AMP</name>
        <dbReference type="ChEBI" id="CHEBI:456215"/>
    </ligand>
</feature>
<feature type="binding site" evidence="1">
    <location>
        <position position="242"/>
    </location>
    <ligand>
        <name>ATP</name>
        <dbReference type="ChEBI" id="CHEBI:30616"/>
    </ligand>
</feature>
<dbReference type="EC" id="2.7.4.3" evidence="1"/>
<dbReference type="EMBL" id="AAHF01000007">
    <property type="protein sequence ID" value="EAL88461.1"/>
    <property type="molecule type" value="Genomic_DNA"/>
</dbReference>
<dbReference type="RefSeq" id="XP_750499.1">
    <property type="nucleotide sequence ID" value="XM_745406.1"/>
</dbReference>
<dbReference type="SMR" id="Q4WJ21"/>
<dbReference type="FunCoup" id="Q4WJ21">
    <property type="interactions" value="838"/>
</dbReference>
<dbReference type="STRING" id="330879.Q4WJ21"/>
<dbReference type="EnsemblFungi" id="EAL88461">
    <property type="protein sequence ID" value="EAL88461"/>
    <property type="gene ID" value="AFUA_1G07530"/>
</dbReference>
<dbReference type="GeneID" id="3507758"/>
<dbReference type="KEGG" id="afm:AFUA_1G07530"/>
<dbReference type="VEuPathDB" id="FungiDB:Afu1g07530"/>
<dbReference type="eggNOG" id="KOG3078">
    <property type="taxonomic scope" value="Eukaryota"/>
</dbReference>
<dbReference type="HOGENOM" id="CLU_032354_1_0_1"/>
<dbReference type="InParanoid" id="Q4WJ21"/>
<dbReference type="OMA" id="VYHEQTA"/>
<dbReference type="OrthoDB" id="439792at2759"/>
<dbReference type="Proteomes" id="UP000002530">
    <property type="component" value="Chromosome 1"/>
</dbReference>
<dbReference type="GO" id="GO:0005737">
    <property type="term" value="C:cytoplasm"/>
    <property type="evidence" value="ECO:0000318"/>
    <property type="project" value="GO_Central"/>
</dbReference>
<dbReference type="GO" id="GO:0005829">
    <property type="term" value="C:cytosol"/>
    <property type="evidence" value="ECO:0007669"/>
    <property type="project" value="UniProtKB-SubCell"/>
</dbReference>
<dbReference type="GO" id="GO:0005758">
    <property type="term" value="C:mitochondrial intermembrane space"/>
    <property type="evidence" value="ECO:0007669"/>
    <property type="project" value="UniProtKB-SubCell"/>
</dbReference>
<dbReference type="GO" id="GO:0005739">
    <property type="term" value="C:mitochondrion"/>
    <property type="evidence" value="ECO:0000318"/>
    <property type="project" value="GO_Central"/>
</dbReference>
<dbReference type="GO" id="GO:0004017">
    <property type="term" value="F:adenylate kinase activity"/>
    <property type="evidence" value="ECO:0000318"/>
    <property type="project" value="GO_Central"/>
</dbReference>
<dbReference type="GO" id="GO:0016208">
    <property type="term" value="F:AMP binding"/>
    <property type="evidence" value="ECO:0007669"/>
    <property type="project" value="EnsemblFungi"/>
</dbReference>
<dbReference type="GO" id="GO:0005524">
    <property type="term" value="F:ATP binding"/>
    <property type="evidence" value="ECO:0007669"/>
    <property type="project" value="UniProtKB-KW"/>
</dbReference>
<dbReference type="GO" id="GO:0003688">
    <property type="term" value="F:DNA replication origin binding"/>
    <property type="evidence" value="ECO:0007669"/>
    <property type="project" value="EnsemblFungi"/>
</dbReference>
<dbReference type="GO" id="GO:0006172">
    <property type="term" value="P:ADP biosynthetic process"/>
    <property type="evidence" value="ECO:0000318"/>
    <property type="project" value="GO_Central"/>
</dbReference>
<dbReference type="GO" id="GO:0046033">
    <property type="term" value="P:AMP metabolic process"/>
    <property type="evidence" value="ECO:0007669"/>
    <property type="project" value="UniProtKB-UniRule"/>
</dbReference>
<dbReference type="GO" id="GO:0046034">
    <property type="term" value="P:ATP metabolic process"/>
    <property type="evidence" value="ECO:0007669"/>
    <property type="project" value="UniProtKB-UniRule"/>
</dbReference>
<dbReference type="GO" id="GO:0006270">
    <property type="term" value="P:DNA replication initiation"/>
    <property type="evidence" value="ECO:0007669"/>
    <property type="project" value="EnsemblFungi"/>
</dbReference>
<dbReference type="GO" id="GO:0036388">
    <property type="term" value="P:pre-replicative complex assembly"/>
    <property type="evidence" value="ECO:0007669"/>
    <property type="project" value="EnsemblFungi"/>
</dbReference>
<dbReference type="CDD" id="cd01428">
    <property type="entry name" value="ADK"/>
    <property type="match status" value="1"/>
</dbReference>
<dbReference type="FunFam" id="3.40.50.300:FF:000106">
    <property type="entry name" value="Adenylate kinase mitochondrial"/>
    <property type="match status" value="1"/>
</dbReference>
<dbReference type="Gene3D" id="3.40.50.300">
    <property type="entry name" value="P-loop containing nucleotide triphosphate hydrolases"/>
    <property type="match status" value="1"/>
</dbReference>
<dbReference type="HAMAP" id="MF_00235">
    <property type="entry name" value="Adenylate_kinase_Adk"/>
    <property type="match status" value="1"/>
</dbReference>
<dbReference type="HAMAP" id="MF_03168">
    <property type="entry name" value="Adenylate_kinase_AK2"/>
    <property type="match status" value="1"/>
</dbReference>
<dbReference type="InterPro" id="IPR006259">
    <property type="entry name" value="Adenyl_kin_sub"/>
</dbReference>
<dbReference type="InterPro" id="IPR000850">
    <property type="entry name" value="Adenylat/UMP-CMP_kin"/>
</dbReference>
<dbReference type="InterPro" id="IPR033690">
    <property type="entry name" value="Adenylat_kinase_CS"/>
</dbReference>
<dbReference type="InterPro" id="IPR007862">
    <property type="entry name" value="Adenylate_kinase_lid-dom"/>
</dbReference>
<dbReference type="InterPro" id="IPR028587">
    <property type="entry name" value="AK2"/>
</dbReference>
<dbReference type="InterPro" id="IPR027417">
    <property type="entry name" value="P-loop_NTPase"/>
</dbReference>
<dbReference type="NCBIfam" id="TIGR01351">
    <property type="entry name" value="adk"/>
    <property type="match status" value="1"/>
</dbReference>
<dbReference type="NCBIfam" id="NF001380">
    <property type="entry name" value="PRK00279.1-2"/>
    <property type="match status" value="1"/>
</dbReference>
<dbReference type="NCBIfam" id="NF001381">
    <property type="entry name" value="PRK00279.1-3"/>
    <property type="match status" value="1"/>
</dbReference>
<dbReference type="NCBIfam" id="NF011100">
    <property type="entry name" value="PRK14527.1"/>
    <property type="match status" value="1"/>
</dbReference>
<dbReference type="PANTHER" id="PTHR23359">
    <property type="entry name" value="NUCLEOTIDE KINASE"/>
    <property type="match status" value="1"/>
</dbReference>
<dbReference type="Pfam" id="PF00406">
    <property type="entry name" value="ADK"/>
    <property type="match status" value="1"/>
</dbReference>
<dbReference type="Pfam" id="PF05191">
    <property type="entry name" value="ADK_lid"/>
    <property type="match status" value="1"/>
</dbReference>
<dbReference type="PRINTS" id="PR00094">
    <property type="entry name" value="ADENYLTKNASE"/>
</dbReference>
<dbReference type="SUPFAM" id="SSF52540">
    <property type="entry name" value="P-loop containing nucleoside triphosphate hydrolases"/>
    <property type="match status" value="1"/>
</dbReference>
<dbReference type="PROSITE" id="PS00113">
    <property type="entry name" value="ADENYLATE_KINASE"/>
    <property type="match status" value="1"/>
</dbReference>
<sequence length="257" mass="28703">MAPITEEVVHGLKDMIEKLENRVQELEARLGGESKPKSIAEQMRIVLMGPPGAGKGTQAPRLKEKYCVCHLATGDMLRSQVAKKTELGKEAKKIMDQGGLVSDEIMVNMIKNELDTNSECKNGFILDGFPRTVAQAERLDDMLEARNQKLQHAIELQIDDALLVARITGRLVHPASGRSYHKIFNPPKNDMKDDVTGEPLIQRSDDNAETLKKRLSTYHAQTAPVVEYYKKTGIWRGIDASQEPGQVWKSLLGVFQK</sequence>
<gene>
    <name type="primary">adk1</name>
    <name type="ORF">AFUA_1G07530</name>
</gene>
<comment type="function">
    <text evidence="1">Catalyzes the reversible transfer of the terminal phosphate group between ATP and AMP. Plays an important role in cellular energy homeostasis and in adenine nucleotide metabolism. Adenylate kinase activity is critical for regulation of the phosphate utilization and the AMP de novo biosynthesis pathways.</text>
</comment>
<comment type="catalytic activity">
    <reaction evidence="1">
        <text>AMP + ATP = 2 ADP</text>
        <dbReference type="Rhea" id="RHEA:12973"/>
        <dbReference type="ChEBI" id="CHEBI:30616"/>
        <dbReference type="ChEBI" id="CHEBI:456215"/>
        <dbReference type="ChEBI" id="CHEBI:456216"/>
        <dbReference type="EC" id="2.7.4.3"/>
    </reaction>
</comment>
<comment type="subunit">
    <text evidence="1">Monomer.</text>
</comment>
<comment type="subcellular location">
    <subcellularLocation>
        <location evidence="1">Cytoplasm</location>
        <location evidence="1">Cytosol</location>
    </subcellularLocation>
    <subcellularLocation>
        <location evidence="1">Mitochondrion intermembrane space</location>
    </subcellularLocation>
    <text evidence="1">Predominantly mitochondrial.</text>
</comment>
<comment type="domain">
    <text evidence="1">Consists of three domains, a large central CORE domain and two small peripheral domains, NMPbind and LID, which undergo movements during catalysis. The LID domain closes over the site of phosphoryl transfer upon ATP binding. Assembling and dissambling the active center during each catalytic cycle provides an effective means to prevent ATP hydrolysis.</text>
</comment>
<comment type="similarity">
    <text evidence="1">Belongs to the adenylate kinase family. AK2 subfamily.</text>
</comment>
<reference key="1">
    <citation type="journal article" date="2005" name="Nature">
        <title>Genomic sequence of the pathogenic and allergenic filamentous fungus Aspergillus fumigatus.</title>
        <authorList>
            <person name="Nierman W.C."/>
            <person name="Pain A."/>
            <person name="Anderson M.J."/>
            <person name="Wortman J.R."/>
            <person name="Kim H.S."/>
            <person name="Arroyo J."/>
            <person name="Berriman M."/>
            <person name="Abe K."/>
            <person name="Archer D.B."/>
            <person name="Bermejo C."/>
            <person name="Bennett J.W."/>
            <person name="Bowyer P."/>
            <person name="Chen D."/>
            <person name="Collins M."/>
            <person name="Coulsen R."/>
            <person name="Davies R."/>
            <person name="Dyer P.S."/>
            <person name="Farman M.L."/>
            <person name="Fedorova N."/>
            <person name="Fedorova N.D."/>
            <person name="Feldblyum T.V."/>
            <person name="Fischer R."/>
            <person name="Fosker N."/>
            <person name="Fraser A."/>
            <person name="Garcia J.L."/>
            <person name="Garcia M.J."/>
            <person name="Goble A."/>
            <person name="Goldman G.H."/>
            <person name="Gomi K."/>
            <person name="Griffith-Jones S."/>
            <person name="Gwilliam R."/>
            <person name="Haas B.J."/>
            <person name="Haas H."/>
            <person name="Harris D.E."/>
            <person name="Horiuchi H."/>
            <person name="Huang J."/>
            <person name="Humphray S."/>
            <person name="Jimenez J."/>
            <person name="Keller N."/>
            <person name="Khouri H."/>
            <person name="Kitamoto K."/>
            <person name="Kobayashi T."/>
            <person name="Konzack S."/>
            <person name="Kulkarni R."/>
            <person name="Kumagai T."/>
            <person name="Lafton A."/>
            <person name="Latge J.-P."/>
            <person name="Li W."/>
            <person name="Lord A."/>
            <person name="Lu C."/>
            <person name="Majoros W.H."/>
            <person name="May G.S."/>
            <person name="Miller B.L."/>
            <person name="Mohamoud Y."/>
            <person name="Molina M."/>
            <person name="Monod M."/>
            <person name="Mouyna I."/>
            <person name="Mulligan S."/>
            <person name="Murphy L.D."/>
            <person name="O'Neil S."/>
            <person name="Paulsen I."/>
            <person name="Penalva M.A."/>
            <person name="Pertea M."/>
            <person name="Price C."/>
            <person name="Pritchard B.L."/>
            <person name="Quail M.A."/>
            <person name="Rabbinowitsch E."/>
            <person name="Rawlins N."/>
            <person name="Rajandream M.A."/>
            <person name="Reichard U."/>
            <person name="Renauld H."/>
            <person name="Robson G.D."/>
            <person name="Rodriguez de Cordoba S."/>
            <person name="Rodriguez-Pena J.M."/>
            <person name="Ronning C.M."/>
            <person name="Rutter S."/>
            <person name="Salzberg S.L."/>
            <person name="Sanchez M."/>
            <person name="Sanchez-Ferrero J.C."/>
            <person name="Saunders D."/>
            <person name="Seeger K."/>
            <person name="Squares R."/>
            <person name="Squares S."/>
            <person name="Takeuchi M."/>
            <person name="Tekaia F."/>
            <person name="Turner G."/>
            <person name="Vazquez de Aldana C.R."/>
            <person name="Weidman J."/>
            <person name="White O."/>
            <person name="Woodward J.R."/>
            <person name="Yu J.-H."/>
            <person name="Fraser C.M."/>
            <person name="Galagan J.E."/>
            <person name="Asai K."/>
            <person name="Machida M."/>
            <person name="Hall N."/>
            <person name="Barrell B.G."/>
            <person name="Denning D.W."/>
        </authorList>
    </citation>
    <scope>NUCLEOTIDE SEQUENCE [LARGE SCALE GENOMIC DNA]</scope>
    <source>
        <strain>ATCC MYA-4609 / CBS 101355 / FGSC A1100 / Af293</strain>
    </source>
</reference>
<evidence type="ECO:0000255" key="1">
    <source>
        <dbReference type="HAMAP-Rule" id="MF_03168"/>
    </source>
</evidence>
<proteinExistence type="inferred from homology"/>
<name>KAD2_ASPFU</name>
<keyword id="KW-0067">ATP-binding</keyword>
<keyword id="KW-0963">Cytoplasm</keyword>
<keyword id="KW-0418">Kinase</keyword>
<keyword id="KW-0496">Mitochondrion</keyword>
<keyword id="KW-0547">Nucleotide-binding</keyword>
<keyword id="KW-1185">Reference proteome</keyword>
<keyword id="KW-0808">Transferase</keyword>
<protein>
    <recommendedName>
        <fullName evidence="1">Adenylate kinase</fullName>
        <ecNumber evidence="1">2.7.4.3</ecNumber>
    </recommendedName>
    <alternativeName>
        <fullName evidence="1">ATP-AMP transphosphorylase</fullName>
    </alternativeName>
    <alternativeName>
        <fullName evidence="1">ATP:AMP phosphotransferase</fullName>
    </alternativeName>
    <alternativeName>
        <fullName evidence="1">Adenylate kinase cytosolic and mitochondrial</fullName>
    </alternativeName>
    <alternativeName>
        <fullName evidence="1">Adenylate monophosphate kinase</fullName>
    </alternativeName>
</protein>
<accession>Q4WJ21</accession>
<organism>
    <name type="scientific">Aspergillus fumigatus (strain ATCC MYA-4609 / CBS 101355 / FGSC A1100 / Af293)</name>
    <name type="common">Neosartorya fumigata</name>
    <dbReference type="NCBI Taxonomy" id="330879"/>
    <lineage>
        <taxon>Eukaryota</taxon>
        <taxon>Fungi</taxon>
        <taxon>Dikarya</taxon>
        <taxon>Ascomycota</taxon>
        <taxon>Pezizomycotina</taxon>
        <taxon>Eurotiomycetes</taxon>
        <taxon>Eurotiomycetidae</taxon>
        <taxon>Eurotiales</taxon>
        <taxon>Aspergillaceae</taxon>
        <taxon>Aspergillus</taxon>
        <taxon>Aspergillus subgen. Fumigati</taxon>
    </lineage>
</organism>